<keyword id="KW-0963">Cytoplasm</keyword>
<keyword id="KW-0378">Hydrolase</keyword>
<keyword id="KW-0546">Nucleotide metabolism</keyword>
<proteinExistence type="inferred from homology"/>
<comment type="function">
    <text evidence="1">Nucleoside triphosphate pyrophosphatase that hydrolyzes dTTP and UTP. May have a dual role in cell division arrest and in preventing the incorporation of modified nucleotides into cellular nucleic acids.</text>
</comment>
<comment type="catalytic activity">
    <reaction evidence="1">
        <text>dTTP + H2O = dTMP + diphosphate + H(+)</text>
        <dbReference type="Rhea" id="RHEA:28534"/>
        <dbReference type="ChEBI" id="CHEBI:15377"/>
        <dbReference type="ChEBI" id="CHEBI:15378"/>
        <dbReference type="ChEBI" id="CHEBI:33019"/>
        <dbReference type="ChEBI" id="CHEBI:37568"/>
        <dbReference type="ChEBI" id="CHEBI:63528"/>
        <dbReference type="EC" id="3.6.1.9"/>
    </reaction>
</comment>
<comment type="catalytic activity">
    <reaction evidence="1">
        <text>UTP + H2O = UMP + diphosphate + H(+)</text>
        <dbReference type="Rhea" id="RHEA:29395"/>
        <dbReference type="ChEBI" id="CHEBI:15377"/>
        <dbReference type="ChEBI" id="CHEBI:15378"/>
        <dbReference type="ChEBI" id="CHEBI:33019"/>
        <dbReference type="ChEBI" id="CHEBI:46398"/>
        <dbReference type="ChEBI" id="CHEBI:57865"/>
        <dbReference type="EC" id="3.6.1.9"/>
    </reaction>
</comment>
<comment type="cofactor">
    <cofactor evidence="1">
        <name>a divalent metal cation</name>
        <dbReference type="ChEBI" id="CHEBI:60240"/>
    </cofactor>
</comment>
<comment type="subcellular location">
    <subcellularLocation>
        <location evidence="1">Cytoplasm</location>
    </subcellularLocation>
</comment>
<comment type="similarity">
    <text evidence="1">Belongs to the Maf family. YhdE subfamily.</text>
</comment>
<accession>Q3AQS4</accession>
<feature type="chain" id="PRO_0000267282" description="dTTP/UTP pyrophosphatase">
    <location>
        <begin position="1"/>
        <end position="196"/>
    </location>
</feature>
<feature type="active site" description="Proton acceptor" evidence="1">
    <location>
        <position position="76"/>
    </location>
</feature>
<feature type="site" description="Important for substrate specificity" evidence="1">
    <location>
        <position position="15"/>
    </location>
</feature>
<feature type="site" description="Important for substrate specificity" evidence="1">
    <location>
        <position position="77"/>
    </location>
</feature>
<feature type="site" description="Important for substrate specificity" evidence="1">
    <location>
        <position position="159"/>
    </location>
</feature>
<evidence type="ECO:0000255" key="1">
    <source>
        <dbReference type="HAMAP-Rule" id="MF_00528"/>
    </source>
</evidence>
<protein>
    <recommendedName>
        <fullName evidence="1">dTTP/UTP pyrophosphatase</fullName>
        <shortName evidence="1">dTTPase/UTPase</shortName>
        <ecNumber evidence="1">3.6.1.9</ecNumber>
    </recommendedName>
    <alternativeName>
        <fullName evidence="1">Nucleoside triphosphate pyrophosphatase</fullName>
    </alternativeName>
    <alternativeName>
        <fullName evidence="1">Nucleotide pyrophosphatase</fullName>
        <shortName evidence="1">Nucleotide PPase</shortName>
    </alternativeName>
</protein>
<reference key="1">
    <citation type="submission" date="2005-08" db="EMBL/GenBank/DDBJ databases">
        <title>Complete sequence of Chlorobium chlorochromatii CaD3.</title>
        <authorList>
            <consortium name="US DOE Joint Genome Institute"/>
            <person name="Copeland A."/>
            <person name="Lucas S."/>
            <person name="Lapidus A."/>
            <person name="Barry K."/>
            <person name="Detter J.C."/>
            <person name="Glavina T."/>
            <person name="Hammon N."/>
            <person name="Israni S."/>
            <person name="Pitluck S."/>
            <person name="Bryant D."/>
            <person name="Schmutz J."/>
            <person name="Larimer F."/>
            <person name="Land M."/>
            <person name="Kyrpides N."/>
            <person name="Ivanova N."/>
            <person name="Richardson P."/>
        </authorList>
    </citation>
    <scope>NUCLEOTIDE SEQUENCE [LARGE SCALE GENOMIC DNA]</scope>
    <source>
        <strain>CaD3</strain>
    </source>
</reference>
<sequence length="196" mass="21637">MNLPYPIILASQSPRRRELLALTLLPFETMSVNTPETLNPTLSPEENVLAIAHEKADAVATILAHTKRQAIVLTADTMVAQGRHIFGKPSGFDEAFSMLQHLQGKTHQVHTGFTLRTPTINHSEYVTTHVTLNAMSSEAIAHYLHQQQPYDKAGSYGIQDPLMACHISSINGCYYNVVGLPLSRVWLALQAIIAQQ</sequence>
<organism>
    <name type="scientific">Chlorobium chlorochromatii (strain CaD3)</name>
    <dbReference type="NCBI Taxonomy" id="340177"/>
    <lineage>
        <taxon>Bacteria</taxon>
        <taxon>Pseudomonadati</taxon>
        <taxon>Chlorobiota</taxon>
        <taxon>Chlorobiia</taxon>
        <taxon>Chlorobiales</taxon>
        <taxon>Chlorobiaceae</taxon>
        <taxon>Chlorobium/Pelodictyon group</taxon>
        <taxon>Chlorobium</taxon>
    </lineage>
</organism>
<gene>
    <name type="ordered locus">Cag_1393</name>
</gene>
<name>NTPPA_CHLCH</name>
<dbReference type="EC" id="3.6.1.9" evidence="1"/>
<dbReference type="EMBL" id="CP000108">
    <property type="protein sequence ID" value="ABB28651.1"/>
    <property type="molecule type" value="Genomic_DNA"/>
</dbReference>
<dbReference type="SMR" id="Q3AQS4"/>
<dbReference type="STRING" id="340177.Cag_1393"/>
<dbReference type="KEGG" id="cch:Cag_1393"/>
<dbReference type="eggNOG" id="COG0424">
    <property type="taxonomic scope" value="Bacteria"/>
</dbReference>
<dbReference type="HOGENOM" id="CLU_040416_0_0_10"/>
<dbReference type="OrthoDB" id="9807767at2"/>
<dbReference type="GO" id="GO:0005737">
    <property type="term" value="C:cytoplasm"/>
    <property type="evidence" value="ECO:0007669"/>
    <property type="project" value="UniProtKB-SubCell"/>
</dbReference>
<dbReference type="GO" id="GO:0036218">
    <property type="term" value="F:dTTP diphosphatase activity"/>
    <property type="evidence" value="ECO:0007669"/>
    <property type="project" value="RHEA"/>
</dbReference>
<dbReference type="GO" id="GO:0036221">
    <property type="term" value="F:UTP diphosphatase activity"/>
    <property type="evidence" value="ECO:0007669"/>
    <property type="project" value="RHEA"/>
</dbReference>
<dbReference type="GO" id="GO:0009117">
    <property type="term" value="P:nucleotide metabolic process"/>
    <property type="evidence" value="ECO:0007669"/>
    <property type="project" value="UniProtKB-KW"/>
</dbReference>
<dbReference type="CDD" id="cd00555">
    <property type="entry name" value="Maf"/>
    <property type="match status" value="1"/>
</dbReference>
<dbReference type="Gene3D" id="3.90.950.10">
    <property type="match status" value="1"/>
</dbReference>
<dbReference type="HAMAP" id="MF_00528">
    <property type="entry name" value="Maf"/>
    <property type="match status" value="1"/>
</dbReference>
<dbReference type="InterPro" id="IPR029001">
    <property type="entry name" value="ITPase-like_fam"/>
</dbReference>
<dbReference type="InterPro" id="IPR003697">
    <property type="entry name" value="Maf-like"/>
</dbReference>
<dbReference type="NCBIfam" id="TIGR00172">
    <property type="entry name" value="maf"/>
    <property type="match status" value="1"/>
</dbReference>
<dbReference type="PANTHER" id="PTHR43213">
    <property type="entry name" value="BIFUNCTIONAL DTTP/UTP PYROPHOSPHATASE/METHYLTRANSFERASE PROTEIN-RELATED"/>
    <property type="match status" value="1"/>
</dbReference>
<dbReference type="PANTHER" id="PTHR43213:SF5">
    <property type="entry name" value="BIFUNCTIONAL DTTP_UTP PYROPHOSPHATASE_METHYLTRANSFERASE PROTEIN-RELATED"/>
    <property type="match status" value="1"/>
</dbReference>
<dbReference type="Pfam" id="PF02545">
    <property type="entry name" value="Maf"/>
    <property type="match status" value="1"/>
</dbReference>
<dbReference type="PIRSF" id="PIRSF006305">
    <property type="entry name" value="Maf"/>
    <property type="match status" value="1"/>
</dbReference>
<dbReference type="SUPFAM" id="SSF52972">
    <property type="entry name" value="ITPase-like"/>
    <property type="match status" value="1"/>
</dbReference>